<name>ACEK_SALTI</name>
<sequence length="593" mass="69249">MPRGLELLIAQTILQGFDAQYGRFLEVTSGAQQRFEQADWHAVQQAMKSRIHLYDHHVGLVVEQLRCITDGKSTDADFLLRVKEHYTRLLPDYPRFEIAESFFNSVYCRLFDHRSLTPERLFIFSSQPERRFRTIPRPLAKDFFPDHGWEPLLMRILSDLPLCLPWQNKSRDIRYIIAHLTETLGEDALPRCHVQVANELFYRNKAAWLVGKLTTPDGTLPFLLPIHRTDEGELFVDTCLTTTAEASIVFGFARSYFMVYAPLPAALVEWLREILPGKTTAELYMAIGCQKHAKTESYREYLCYLAESDEKFIEAPGIRGMVMLVFTLPGFDRVFKIIKDKFAPQKEMSAAHVRACYQLVKEHDRVGRMADTQEFENFVLDKRQIDPALMALLRQEAPEKITDLGEHIVIRHLYIERRMVPLNIWLEQVEGQQLRDAIEEYGNAIRQLAAANIFPGDMLFKNFGVTRHGRVVFYDYDEICYMTEVNFRDIPPARYPEDELASEPWYSVSPGDVFPEEFRHWLCADPRIGPLFEEMHADLFRADYWRALQTRIKEGHVEDVYAYRRRQRFSVRYETDRRPDKAFAPPSGNVRRA</sequence>
<proteinExistence type="inferred from homology"/>
<keyword id="KW-0067">ATP-binding</keyword>
<keyword id="KW-0963">Cytoplasm</keyword>
<keyword id="KW-0329">Glyoxylate bypass</keyword>
<keyword id="KW-0378">Hydrolase</keyword>
<keyword id="KW-0418">Kinase</keyword>
<keyword id="KW-0547">Nucleotide-binding</keyword>
<keyword id="KW-0904">Protein phosphatase</keyword>
<keyword id="KW-0723">Serine/threonine-protein kinase</keyword>
<keyword id="KW-0808">Transferase</keyword>
<keyword id="KW-0816">Tricarboxylic acid cycle</keyword>
<evidence type="ECO:0000255" key="1">
    <source>
        <dbReference type="HAMAP-Rule" id="MF_00747"/>
    </source>
</evidence>
<dbReference type="EC" id="2.7.11.5" evidence="1"/>
<dbReference type="EC" id="3.1.3.-" evidence="1"/>
<dbReference type="EMBL" id="AL513382">
    <property type="protein sequence ID" value="CAD09191.1"/>
    <property type="molecule type" value="Genomic_DNA"/>
</dbReference>
<dbReference type="EMBL" id="AE014613">
    <property type="protein sequence ID" value="AAO71577.1"/>
    <property type="molecule type" value="Genomic_DNA"/>
</dbReference>
<dbReference type="RefSeq" id="NP_458505.1">
    <property type="nucleotide sequence ID" value="NC_003198.1"/>
</dbReference>
<dbReference type="RefSeq" id="WP_001137261.1">
    <property type="nucleotide sequence ID" value="NZ_WSUR01000027.1"/>
</dbReference>
<dbReference type="SMR" id="Q8Z1V8"/>
<dbReference type="STRING" id="220341.gene:17588235"/>
<dbReference type="KEGG" id="stt:t4113"/>
<dbReference type="KEGG" id="sty:STY4403"/>
<dbReference type="PATRIC" id="fig|220341.7.peg.4501"/>
<dbReference type="eggNOG" id="COG4579">
    <property type="taxonomic scope" value="Bacteria"/>
</dbReference>
<dbReference type="HOGENOM" id="CLU_033804_1_1_6"/>
<dbReference type="OMA" id="EPWYSVG"/>
<dbReference type="OrthoDB" id="5287793at2"/>
<dbReference type="Proteomes" id="UP000000541">
    <property type="component" value="Chromosome"/>
</dbReference>
<dbReference type="Proteomes" id="UP000002670">
    <property type="component" value="Chromosome"/>
</dbReference>
<dbReference type="GO" id="GO:0005737">
    <property type="term" value="C:cytoplasm"/>
    <property type="evidence" value="ECO:0007669"/>
    <property type="project" value="UniProtKB-SubCell"/>
</dbReference>
<dbReference type="GO" id="GO:0008772">
    <property type="term" value="F:[isocitrate dehydrogenase (NADP+)] kinase activity"/>
    <property type="evidence" value="ECO:0007669"/>
    <property type="project" value="UniProtKB-UniRule"/>
</dbReference>
<dbReference type="GO" id="GO:0016208">
    <property type="term" value="F:AMP binding"/>
    <property type="evidence" value="ECO:0007669"/>
    <property type="project" value="TreeGrafter"/>
</dbReference>
<dbReference type="GO" id="GO:0005524">
    <property type="term" value="F:ATP binding"/>
    <property type="evidence" value="ECO:0007669"/>
    <property type="project" value="UniProtKB-UniRule"/>
</dbReference>
<dbReference type="GO" id="GO:0004721">
    <property type="term" value="F:phosphoprotein phosphatase activity"/>
    <property type="evidence" value="ECO:0007669"/>
    <property type="project" value="UniProtKB-KW"/>
</dbReference>
<dbReference type="GO" id="GO:0004674">
    <property type="term" value="F:protein serine/threonine kinase activity"/>
    <property type="evidence" value="ECO:0007669"/>
    <property type="project" value="UniProtKB-KW"/>
</dbReference>
<dbReference type="GO" id="GO:0006006">
    <property type="term" value="P:glucose metabolic process"/>
    <property type="evidence" value="ECO:0007669"/>
    <property type="project" value="InterPro"/>
</dbReference>
<dbReference type="GO" id="GO:0006097">
    <property type="term" value="P:glyoxylate cycle"/>
    <property type="evidence" value="ECO:0007669"/>
    <property type="project" value="UniProtKB-UniRule"/>
</dbReference>
<dbReference type="GO" id="GO:0006099">
    <property type="term" value="P:tricarboxylic acid cycle"/>
    <property type="evidence" value="ECO:0007669"/>
    <property type="project" value="UniProtKB-UniRule"/>
</dbReference>
<dbReference type="HAMAP" id="MF_00747">
    <property type="entry name" value="AceK"/>
    <property type="match status" value="1"/>
</dbReference>
<dbReference type="InterPro" id="IPR046855">
    <property type="entry name" value="AceK_kinase"/>
</dbReference>
<dbReference type="InterPro" id="IPR046854">
    <property type="entry name" value="AceK_regulatory"/>
</dbReference>
<dbReference type="InterPro" id="IPR010452">
    <property type="entry name" value="Isocitrate_DH_AceK"/>
</dbReference>
<dbReference type="NCBIfam" id="NF002804">
    <property type="entry name" value="PRK02946.1"/>
    <property type="match status" value="1"/>
</dbReference>
<dbReference type="PANTHER" id="PTHR39559">
    <property type="match status" value="1"/>
</dbReference>
<dbReference type="PANTHER" id="PTHR39559:SF1">
    <property type="entry name" value="ISOCITRATE DEHYDROGENASE KINASE_PHOSPHATASE"/>
    <property type="match status" value="1"/>
</dbReference>
<dbReference type="Pfam" id="PF06315">
    <property type="entry name" value="AceK_kinase"/>
    <property type="match status" value="1"/>
</dbReference>
<dbReference type="Pfam" id="PF20423">
    <property type="entry name" value="AceK_regulatory"/>
    <property type="match status" value="1"/>
</dbReference>
<dbReference type="PIRSF" id="PIRSF000719">
    <property type="entry name" value="AceK"/>
    <property type="match status" value="1"/>
</dbReference>
<organism>
    <name type="scientific">Salmonella typhi</name>
    <dbReference type="NCBI Taxonomy" id="90370"/>
    <lineage>
        <taxon>Bacteria</taxon>
        <taxon>Pseudomonadati</taxon>
        <taxon>Pseudomonadota</taxon>
        <taxon>Gammaproteobacteria</taxon>
        <taxon>Enterobacterales</taxon>
        <taxon>Enterobacteriaceae</taxon>
        <taxon>Salmonella</taxon>
    </lineage>
</organism>
<gene>
    <name evidence="1" type="primary">aceK</name>
    <name type="ordered locus">STY4403</name>
    <name type="ordered locus">t4113</name>
</gene>
<accession>Q8Z1V8</accession>
<feature type="chain" id="PRO_0000057908" description="Isocitrate dehydrogenase kinase/phosphatase">
    <location>
        <begin position="1"/>
        <end position="593"/>
    </location>
</feature>
<feature type="active site" evidence="1">
    <location>
        <position position="371"/>
    </location>
</feature>
<feature type="binding site" evidence="1">
    <location>
        <begin position="315"/>
        <end position="321"/>
    </location>
    <ligand>
        <name>ATP</name>
        <dbReference type="ChEBI" id="CHEBI:30616"/>
    </ligand>
</feature>
<feature type="binding site" evidence="1">
    <location>
        <position position="336"/>
    </location>
    <ligand>
        <name>ATP</name>
        <dbReference type="ChEBI" id="CHEBI:30616"/>
    </ligand>
</feature>
<reference key="1">
    <citation type="journal article" date="2001" name="Nature">
        <title>Complete genome sequence of a multiple drug resistant Salmonella enterica serovar Typhi CT18.</title>
        <authorList>
            <person name="Parkhill J."/>
            <person name="Dougan G."/>
            <person name="James K.D."/>
            <person name="Thomson N.R."/>
            <person name="Pickard D."/>
            <person name="Wain J."/>
            <person name="Churcher C.M."/>
            <person name="Mungall K.L."/>
            <person name="Bentley S.D."/>
            <person name="Holden M.T.G."/>
            <person name="Sebaihia M."/>
            <person name="Baker S."/>
            <person name="Basham D."/>
            <person name="Brooks K."/>
            <person name="Chillingworth T."/>
            <person name="Connerton P."/>
            <person name="Cronin A."/>
            <person name="Davis P."/>
            <person name="Davies R.M."/>
            <person name="Dowd L."/>
            <person name="White N."/>
            <person name="Farrar J."/>
            <person name="Feltwell T."/>
            <person name="Hamlin N."/>
            <person name="Haque A."/>
            <person name="Hien T.T."/>
            <person name="Holroyd S."/>
            <person name="Jagels K."/>
            <person name="Krogh A."/>
            <person name="Larsen T.S."/>
            <person name="Leather S."/>
            <person name="Moule S."/>
            <person name="O'Gaora P."/>
            <person name="Parry C."/>
            <person name="Quail M.A."/>
            <person name="Rutherford K.M."/>
            <person name="Simmonds M."/>
            <person name="Skelton J."/>
            <person name="Stevens K."/>
            <person name="Whitehead S."/>
            <person name="Barrell B.G."/>
        </authorList>
    </citation>
    <scope>NUCLEOTIDE SEQUENCE [LARGE SCALE GENOMIC DNA]</scope>
    <source>
        <strain>CT18</strain>
    </source>
</reference>
<reference key="2">
    <citation type="journal article" date="2003" name="J. Bacteriol.">
        <title>Comparative genomics of Salmonella enterica serovar Typhi strains Ty2 and CT18.</title>
        <authorList>
            <person name="Deng W."/>
            <person name="Liou S.-R."/>
            <person name="Plunkett G. III"/>
            <person name="Mayhew G.F."/>
            <person name="Rose D.J."/>
            <person name="Burland V."/>
            <person name="Kodoyianni V."/>
            <person name="Schwartz D.C."/>
            <person name="Blattner F.R."/>
        </authorList>
    </citation>
    <scope>NUCLEOTIDE SEQUENCE [LARGE SCALE GENOMIC DNA]</scope>
    <source>
        <strain>ATCC 700931 / Ty2</strain>
    </source>
</reference>
<protein>
    <recommendedName>
        <fullName evidence="1">Isocitrate dehydrogenase kinase/phosphatase</fullName>
        <shortName evidence="1">IDH kinase/phosphatase</shortName>
        <shortName evidence="1">IDHK/P</shortName>
        <ecNumber evidence="1">2.7.11.5</ecNumber>
        <ecNumber evidence="1">3.1.3.-</ecNumber>
    </recommendedName>
</protein>
<comment type="function">
    <text evidence="1">Bifunctional enzyme which can phosphorylate or dephosphorylate isocitrate dehydrogenase (IDH) on a specific serine residue. This is a regulatory mechanism which enables bacteria to bypass the Krebs cycle via the glyoxylate shunt in response to the source of carbon. When bacteria are grown on glucose, IDH is fully active and unphosphorylated, but when grown on acetate or ethanol, the activity of IDH declines drastically concomitant with its phosphorylation.</text>
</comment>
<comment type="catalytic activity">
    <reaction evidence="1">
        <text>L-seryl-[isocitrate dehydrogenase] + ATP = O-phospho-L-seryl-[isocitrate dehydrogenase] + ADP + H(+)</text>
        <dbReference type="Rhea" id="RHEA:43540"/>
        <dbReference type="Rhea" id="RHEA-COMP:10605"/>
        <dbReference type="Rhea" id="RHEA-COMP:10606"/>
        <dbReference type="ChEBI" id="CHEBI:15378"/>
        <dbReference type="ChEBI" id="CHEBI:29999"/>
        <dbReference type="ChEBI" id="CHEBI:30616"/>
        <dbReference type="ChEBI" id="CHEBI:83421"/>
        <dbReference type="ChEBI" id="CHEBI:456216"/>
        <dbReference type="EC" id="2.7.11.5"/>
    </reaction>
</comment>
<comment type="subcellular location">
    <subcellularLocation>
        <location evidence="1">Cytoplasm</location>
    </subcellularLocation>
</comment>
<comment type="similarity">
    <text evidence="1">Belongs to the AceK family.</text>
</comment>